<reference key="1">
    <citation type="journal article" date="1986" name="Biochim. Biophys. Acta">
        <title>DNA and amino-acid sequences of 3-isopropylmalate dehydrogenase of Bacillus coagulans. Comparison with the enzymes of Saccharomyces cerevisiae and Thermus thermophilus.</title>
        <authorList>
            <person name="Sekiguchi T."/>
            <person name="Ortega-Cesena J."/>
            <person name="Nosoh Y."/>
            <person name="Ohashi S."/>
            <person name="Tsuda K."/>
            <person name="Kanaya S."/>
        </authorList>
    </citation>
    <scope>NUCLEOTIDE SEQUENCE [GENOMIC DNA]</scope>
</reference>
<reference key="2">
    <citation type="journal article" date="1997" name="J. Biochem.">
        <title>Crystal structure of 3-isopropylmalate dehydrogenase from the moderate facultative thermophile, Bacillus coagulans: two strategies for thermostabilization of protein structures.</title>
        <authorList>
            <person name="Tsuchiya D."/>
            <person name="Sekiguchi T."/>
            <person name="Takenaka A."/>
        </authorList>
    </citation>
    <scope>X-RAY CRYSTALLOGRAPHY (3.0 ANGSTROMS)</scope>
    <scope>SUBUNIT</scope>
</reference>
<proteinExistence type="evidence at protein level"/>
<comment type="function">
    <text>Catalyzes the oxidation of 3-carboxy-2-hydroxy-4-methylpentanoate (3-isopropylmalate) to 3-carboxy-4-methyl-2-oxopentanoate. The product decarboxylates to 4-methyl-2 oxopentanoate.</text>
</comment>
<comment type="catalytic activity">
    <reaction>
        <text>(2R,3S)-3-isopropylmalate + NAD(+) = 4-methyl-2-oxopentanoate + CO2 + NADH</text>
        <dbReference type="Rhea" id="RHEA:32271"/>
        <dbReference type="ChEBI" id="CHEBI:16526"/>
        <dbReference type="ChEBI" id="CHEBI:17865"/>
        <dbReference type="ChEBI" id="CHEBI:35121"/>
        <dbReference type="ChEBI" id="CHEBI:57540"/>
        <dbReference type="ChEBI" id="CHEBI:57945"/>
        <dbReference type="EC" id="1.1.1.85"/>
    </reaction>
</comment>
<comment type="cofactor">
    <cofactor>
        <name>Mg(2+)</name>
        <dbReference type="ChEBI" id="CHEBI:18420"/>
    </cofactor>
    <cofactor>
        <name>Mn(2+)</name>
        <dbReference type="ChEBI" id="CHEBI:29035"/>
    </cofactor>
    <text>Binds 1 Mg(2+) or Mn(2+) ion per subunit.</text>
</comment>
<comment type="pathway">
    <text>Amino-acid biosynthesis; L-leucine biosynthesis; L-leucine from 3-methyl-2-oxobutanoate: step 3/4.</text>
</comment>
<comment type="subunit">
    <text evidence="2">Homodimer.</text>
</comment>
<comment type="subcellular location">
    <subcellularLocation>
        <location>Cytoplasm</location>
    </subcellularLocation>
</comment>
<comment type="similarity">
    <text evidence="3">Belongs to the isocitrate and isopropylmalate dehydrogenases family. LeuB type 1 subfamily.</text>
</comment>
<protein>
    <recommendedName>
        <fullName>3-isopropylmalate dehydrogenase</fullName>
        <ecNumber>1.1.1.85</ecNumber>
    </recommendedName>
    <alternativeName>
        <fullName>3-IPM-DH</fullName>
    </alternativeName>
    <alternativeName>
        <fullName>Beta-IPM dehydrogenase</fullName>
        <shortName>IMDH</shortName>
    </alternativeName>
</protein>
<evidence type="ECO:0000250" key="1"/>
<evidence type="ECO:0000269" key="2">
    <source>
    </source>
</evidence>
<evidence type="ECO:0000305" key="3"/>
<evidence type="ECO:0007829" key="4">
    <source>
        <dbReference type="PDB" id="1V53"/>
    </source>
</evidence>
<evidence type="ECO:0007829" key="5">
    <source>
        <dbReference type="PDB" id="1V5B"/>
    </source>
</evidence>
<evidence type="ECO:0007829" key="6">
    <source>
        <dbReference type="PDB" id="2AYQ"/>
    </source>
</evidence>
<keyword id="KW-0002">3D-structure</keyword>
<keyword id="KW-0028">Amino-acid biosynthesis</keyword>
<keyword id="KW-0100">Branched-chain amino acid biosynthesis</keyword>
<keyword id="KW-0963">Cytoplasm</keyword>
<keyword id="KW-0432">Leucine biosynthesis</keyword>
<keyword id="KW-0460">Magnesium</keyword>
<keyword id="KW-0464">Manganese</keyword>
<keyword id="KW-0479">Metal-binding</keyword>
<keyword id="KW-0520">NAD</keyword>
<keyword id="KW-0560">Oxidoreductase</keyword>
<name>LEU3_HEYCO</name>
<feature type="chain" id="PRO_0000083638" description="3-isopropylmalate dehydrogenase">
    <location>
        <begin position="1"/>
        <end position="366"/>
    </location>
</feature>
<feature type="binding site" evidence="1">
    <location>
        <begin position="76"/>
        <end position="89"/>
    </location>
    <ligand>
        <name>NAD(+)</name>
        <dbReference type="ChEBI" id="CHEBI:57540"/>
    </ligand>
</feature>
<feature type="binding site" evidence="1">
    <location>
        <position position="96"/>
    </location>
    <ligand>
        <name>substrate</name>
    </ligand>
</feature>
<feature type="binding site" evidence="1">
    <location>
        <position position="106"/>
    </location>
    <ligand>
        <name>substrate</name>
    </ligand>
</feature>
<feature type="binding site" evidence="1">
    <location>
        <position position="134"/>
    </location>
    <ligand>
        <name>substrate</name>
    </ligand>
</feature>
<feature type="binding site" evidence="1">
    <location>
        <position position="222"/>
    </location>
    <ligand>
        <name>Mg(2+)</name>
        <dbReference type="ChEBI" id="CHEBI:18420"/>
    </ligand>
</feature>
<feature type="binding site" evidence="1">
    <location>
        <position position="222"/>
    </location>
    <ligand>
        <name>substrate</name>
    </ligand>
</feature>
<feature type="binding site" evidence="1">
    <location>
        <position position="246"/>
    </location>
    <ligand>
        <name>Mg(2+)</name>
        <dbReference type="ChEBI" id="CHEBI:18420"/>
    </ligand>
</feature>
<feature type="binding site" evidence="1">
    <location>
        <position position="250"/>
    </location>
    <ligand>
        <name>Mg(2+)</name>
        <dbReference type="ChEBI" id="CHEBI:18420"/>
    </ligand>
</feature>
<feature type="binding site" evidence="1">
    <location>
        <begin position="280"/>
        <end position="292"/>
    </location>
    <ligand>
        <name>NAD(+)</name>
        <dbReference type="ChEBI" id="CHEBI:57540"/>
    </ligand>
</feature>
<feature type="site" description="Important for catalysis" evidence="1">
    <location>
        <position position="141"/>
    </location>
</feature>
<feature type="site" description="Important for catalysis" evidence="1">
    <location>
        <position position="190"/>
    </location>
</feature>
<feature type="strand" evidence="4">
    <location>
        <begin position="3"/>
        <end position="11"/>
    </location>
</feature>
<feature type="helix" evidence="4">
    <location>
        <begin position="14"/>
        <end position="29"/>
    </location>
</feature>
<feature type="turn" evidence="6">
    <location>
        <begin position="30"/>
        <end position="33"/>
    </location>
</feature>
<feature type="strand" evidence="4">
    <location>
        <begin position="36"/>
        <end position="40"/>
    </location>
</feature>
<feature type="helix" evidence="4">
    <location>
        <begin position="45"/>
        <end position="51"/>
    </location>
</feature>
<feature type="strand" evidence="4">
    <location>
        <begin position="52"/>
        <end position="55"/>
    </location>
</feature>
<feature type="helix" evidence="4">
    <location>
        <begin position="57"/>
        <end position="64"/>
    </location>
</feature>
<feature type="strand" evidence="4">
    <location>
        <begin position="66"/>
        <end position="73"/>
    </location>
</feature>
<feature type="helix" evidence="4">
    <location>
        <begin position="77"/>
        <end position="79"/>
    </location>
</feature>
<feature type="strand" evidence="4">
    <location>
        <begin position="80"/>
        <end position="82"/>
    </location>
</feature>
<feature type="helix" evidence="4">
    <location>
        <begin position="84"/>
        <end position="86"/>
    </location>
</feature>
<feature type="helix" evidence="4">
    <location>
        <begin position="88"/>
        <end position="99"/>
    </location>
</feature>
<feature type="strand" evidence="4">
    <location>
        <begin position="103"/>
        <end position="109"/>
    </location>
</feature>
<feature type="helix" evidence="4">
    <location>
        <begin position="112"/>
        <end position="114"/>
    </location>
</feature>
<feature type="turn" evidence="4">
    <location>
        <begin position="115"/>
        <end position="117"/>
    </location>
</feature>
<feature type="strand" evidence="4">
    <location>
        <begin position="118"/>
        <end position="120"/>
    </location>
</feature>
<feature type="helix" evidence="4">
    <location>
        <begin position="122"/>
        <end position="125"/>
    </location>
</feature>
<feature type="strand" evidence="4">
    <location>
        <begin position="129"/>
        <end position="135"/>
    </location>
</feature>
<feature type="strand" evidence="4">
    <location>
        <begin position="137"/>
        <end position="139"/>
    </location>
</feature>
<feature type="turn" evidence="4">
    <location>
        <begin position="140"/>
        <end position="142"/>
    </location>
</feature>
<feature type="strand" evidence="4">
    <location>
        <begin position="146"/>
        <end position="151"/>
    </location>
</feature>
<feature type="strand" evidence="4">
    <location>
        <begin position="155"/>
        <end position="163"/>
    </location>
</feature>
<feature type="helix" evidence="4">
    <location>
        <begin position="164"/>
        <end position="180"/>
    </location>
</feature>
<feature type="strand" evidence="4">
    <location>
        <begin position="183"/>
        <end position="189"/>
    </location>
</feature>
<feature type="turn" evidence="4">
    <location>
        <begin position="191"/>
        <end position="193"/>
    </location>
</feature>
<feature type="helix" evidence="4">
    <location>
        <begin position="195"/>
        <end position="208"/>
    </location>
</feature>
<feature type="strand" evidence="4">
    <location>
        <begin position="214"/>
        <end position="220"/>
    </location>
</feature>
<feature type="helix" evidence="4">
    <location>
        <begin position="221"/>
        <end position="230"/>
    </location>
</feature>
<feature type="helix" evidence="4">
    <location>
        <begin position="232"/>
        <end position="234"/>
    </location>
</feature>
<feature type="strand" evidence="4">
    <location>
        <begin position="236"/>
        <end position="240"/>
    </location>
</feature>
<feature type="helix" evidence="4">
    <location>
        <begin position="242"/>
        <end position="252"/>
    </location>
</feature>
<feature type="turn" evidence="4">
    <location>
        <begin position="253"/>
        <end position="256"/>
    </location>
</feature>
<feature type="helix" evidence="5">
    <location>
        <begin position="259"/>
        <end position="261"/>
    </location>
</feature>
<feature type="strand" evidence="4">
    <location>
        <begin position="263"/>
        <end position="267"/>
    </location>
</feature>
<feature type="strand" evidence="4">
    <location>
        <begin position="269"/>
        <end position="271"/>
    </location>
</feature>
<feature type="strand" evidence="4">
    <location>
        <begin position="273"/>
        <end position="279"/>
    </location>
</feature>
<feature type="helix" evidence="4">
    <location>
        <begin position="283"/>
        <end position="285"/>
    </location>
</feature>
<feature type="turn" evidence="6">
    <location>
        <begin position="286"/>
        <end position="289"/>
    </location>
</feature>
<feature type="helix" evidence="4">
    <location>
        <begin position="294"/>
        <end position="308"/>
    </location>
</feature>
<feature type="helix" evidence="4">
    <location>
        <begin position="311"/>
        <end position="326"/>
    </location>
</feature>
<feature type="strand" evidence="4">
    <location>
        <begin position="329"/>
        <end position="334"/>
    </location>
</feature>
<feature type="helix" evidence="4">
    <location>
        <begin position="344"/>
        <end position="354"/>
    </location>
</feature>
<sequence>MKMKLAVLPGDGIGPEVMDAAIRVLKTVLDNDGHEAVFENALIGGAAIDEAGTPLPEETLDICRRSDAILLGAVGGPKWDHNPASLRPEKGLLGLRKEMGLFANLRPVKAYATLLNASPLKRERVENVDLVIVRELTGGLYFGRPSERRGPGENEVVDTLAYTREEIERIIEKAFQLAQIRRKKLASVDKANVLESSRMWREIAEETAKKYPDVELSHMLVDSTSMQLIANPGQFDVIVTENMFGDILSDEASVITGSLGMLPSASLRSDRFGMYEPVHGSAPDIAGQGKANPLGTVLSAALMLRYSFGLEKEAAAIEKAVDDVLQDGYCTGDLQVANGKVVSTIELTDRLIEKLNNSAARPRIFQ</sequence>
<gene>
    <name type="primary">leuB</name>
</gene>
<dbReference type="EC" id="1.1.1.85"/>
<dbReference type="EMBL" id="M33099">
    <property type="protein sequence ID" value="AAA22554.1"/>
    <property type="status" value="ALT_SEQ"/>
    <property type="molecule type" value="Genomic_DNA"/>
</dbReference>
<dbReference type="PIR" id="A24537">
    <property type="entry name" value="DEBSIC"/>
</dbReference>
<dbReference type="RefSeq" id="WP_029141661.1">
    <property type="nucleotide sequence ID" value="NZ_CABJCT010000015.1"/>
</dbReference>
<dbReference type="PDB" id="1V53">
    <property type="method" value="X-ray"/>
    <property type="resolution" value="2.85 A"/>
    <property type="chains" value="A/B=1-366"/>
</dbReference>
<dbReference type="PDB" id="1V5B">
    <property type="method" value="X-ray"/>
    <property type="resolution" value="2.95 A"/>
    <property type="chains" value="A/B/C/D/E/F/G/H=1-366"/>
</dbReference>
<dbReference type="PDB" id="2AYQ">
    <property type="method" value="X-ray"/>
    <property type="resolution" value="3.00 A"/>
    <property type="chains" value="A/B=1-366"/>
</dbReference>
<dbReference type="PDBsum" id="1V53"/>
<dbReference type="PDBsum" id="1V5B"/>
<dbReference type="PDBsum" id="2AYQ"/>
<dbReference type="SMR" id="P12010"/>
<dbReference type="STRING" id="1398.AB434_0291"/>
<dbReference type="GeneID" id="29815080"/>
<dbReference type="UniPathway" id="UPA00048">
    <property type="reaction ID" value="UER00072"/>
</dbReference>
<dbReference type="EvolutionaryTrace" id="P12010"/>
<dbReference type="GO" id="GO:0005829">
    <property type="term" value="C:cytosol"/>
    <property type="evidence" value="ECO:0007669"/>
    <property type="project" value="TreeGrafter"/>
</dbReference>
<dbReference type="GO" id="GO:0003862">
    <property type="term" value="F:3-isopropylmalate dehydrogenase activity"/>
    <property type="evidence" value="ECO:0007669"/>
    <property type="project" value="UniProtKB-UniRule"/>
</dbReference>
<dbReference type="GO" id="GO:0000287">
    <property type="term" value="F:magnesium ion binding"/>
    <property type="evidence" value="ECO:0007669"/>
    <property type="project" value="InterPro"/>
</dbReference>
<dbReference type="GO" id="GO:0051287">
    <property type="term" value="F:NAD binding"/>
    <property type="evidence" value="ECO:0007669"/>
    <property type="project" value="InterPro"/>
</dbReference>
<dbReference type="GO" id="GO:0009098">
    <property type="term" value="P:L-leucine biosynthetic process"/>
    <property type="evidence" value="ECO:0007669"/>
    <property type="project" value="UniProtKB-UniRule"/>
</dbReference>
<dbReference type="FunFam" id="3.40.718.10:FF:000028">
    <property type="entry name" value="3-isopropylmalate dehydrogenase"/>
    <property type="match status" value="1"/>
</dbReference>
<dbReference type="Gene3D" id="3.40.718.10">
    <property type="entry name" value="Isopropylmalate Dehydrogenase"/>
    <property type="match status" value="1"/>
</dbReference>
<dbReference type="HAMAP" id="MF_01033">
    <property type="entry name" value="LeuB_type1"/>
    <property type="match status" value="1"/>
</dbReference>
<dbReference type="InterPro" id="IPR019818">
    <property type="entry name" value="IsoCit/isopropylmalate_DH_CS"/>
</dbReference>
<dbReference type="InterPro" id="IPR024084">
    <property type="entry name" value="IsoPropMal-DH-like_dom"/>
</dbReference>
<dbReference type="InterPro" id="IPR004429">
    <property type="entry name" value="Isopropylmalate_DH"/>
</dbReference>
<dbReference type="NCBIfam" id="TIGR00169">
    <property type="entry name" value="leuB"/>
    <property type="match status" value="1"/>
</dbReference>
<dbReference type="PANTHER" id="PTHR42979">
    <property type="entry name" value="3-ISOPROPYLMALATE DEHYDROGENASE"/>
    <property type="match status" value="1"/>
</dbReference>
<dbReference type="PANTHER" id="PTHR42979:SF1">
    <property type="entry name" value="3-ISOPROPYLMALATE DEHYDROGENASE"/>
    <property type="match status" value="1"/>
</dbReference>
<dbReference type="Pfam" id="PF00180">
    <property type="entry name" value="Iso_dh"/>
    <property type="match status" value="1"/>
</dbReference>
<dbReference type="SMART" id="SM01329">
    <property type="entry name" value="Iso_dh"/>
    <property type="match status" value="1"/>
</dbReference>
<dbReference type="SUPFAM" id="SSF53659">
    <property type="entry name" value="Isocitrate/Isopropylmalate dehydrogenase-like"/>
    <property type="match status" value="1"/>
</dbReference>
<dbReference type="PROSITE" id="PS00470">
    <property type="entry name" value="IDH_IMDH"/>
    <property type="match status" value="1"/>
</dbReference>
<organism>
    <name type="scientific">Heyndrickxia coagulans</name>
    <name type="common">Weizmannia coagulans</name>
    <dbReference type="NCBI Taxonomy" id="1398"/>
    <lineage>
        <taxon>Bacteria</taxon>
        <taxon>Bacillati</taxon>
        <taxon>Bacillota</taxon>
        <taxon>Bacilli</taxon>
        <taxon>Bacillales</taxon>
        <taxon>Bacillaceae</taxon>
        <taxon>Heyndrickxia</taxon>
    </lineage>
</organism>
<accession>P12010</accession>